<gene>
    <name type="primary">lktA</name>
</gene>
<proteinExistence type="inferred from homology"/>
<dbReference type="EMBL" id="AF314511">
    <property type="protein sequence ID" value="AAG40295.1"/>
    <property type="molecule type" value="Genomic_DNA"/>
</dbReference>
<dbReference type="RefSeq" id="WP_006252564.1">
    <property type="nucleotide sequence ID" value="NZ_VAHP01000149.1"/>
</dbReference>
<dbReference type="SMR" id="P0C082"/>
<dbReference type="GO" id="GO:0005576">
    <property type="term" value="C:extracellular region"/>
    <property type="evidence" value="ECO:0007669"/>
    <property type="project" value="UniProtKB-SubCell"/>
</dbReference>
<dbReference type="GO" id="GO:0020002">
    <property type="term" value="C:host cell plasma membrane"/>
    <property type="evidence" value="ECO:0007669"/>
    <property type="project" value="UniProtKB-SubCell"/>
</dbReference>
<dbReference type="GO" id="GO:0016020">
    <property type="term" value="C:membrane"/>
    <property type="evidence" value="ECO:0007669"/>
    <property type="project" value="UniProtKB-KW"/>
</dbReference>
<dbReference type="GO" id="GO:0005509">
    <property type="term" value="F:calcium ion binding"/>
    <property type="evidence" value="ECO:0007669"/>
    <property type="project" value="InterPro"/>
</dbReference>
<dbReference type="GO" id="GO:0015267">
    <property type="term" value="F:channel activity"/>
    <property type="evidence" value="ECO:0007669"/>
    <property type="project" value="InterPro"/>
</dbReference>
<dbReference type="GO" id="GO:0090729">
    <property type="term" value="F:toxin activity"/>
    <property type="evidence" value="ECO:0007669"/>
    <property type="project" value="UniProtKB-KW"/>
</dbReference>
<dbReference type="GO" id="GO:0031640">
    <property type="term" value="P:killing of cells of another organism"/>
    <property type="evidence" value="ECO:0007669"/>
    <property type="project" value="UniProtKB-KW"/>
</dbReference>
<dbReference type="Gene3D" id="2.150.10.10">
    <property type="entry name" value="Serralysin-like metalloprotease, C-terminal"/>
    <property type="match status" value="1"/>
</dbReference>
<dbReference type="InterPro" id="IPR018511">
    <property type="entry name" value="Hemolysin-typ_Ca-bd_CS"/>
</dbReference>
<dbReference type="InterPro" id="IPR001343">
    <property type="entry name" value="Hemolysn_Ca-bd"/>
</dbReference>
<dbReference type="InterPro" id="IPR013550">
    <property type="entry name" value="RTX_C"/>
</dbReference>
<dbReference type="InterPro" id="IPR018504">
    <property type="entry name" value="RTX_pore_form"/>
</dbReference>
<dbReference type="InterPro" id="IPR050557">
    <property type="entry name" value="RTX_toxin/Mannuronan_C5-epim"/>
</dbReference>
<dbReference type="InterPro" id="IPR003995">
    <property type="entry name" value="RTX_toxin_determinant-A"/>
</dbReference>
<dbReference type="InterPro" id="IPR011049">
    <property type="entry name" value="Serralysin-like_metalloprot_C"/>
</dbReference>
<dbReference type="NCBIfam" id="NF033943">
    <property type="entry name" value="RTX_toxin"/>
    <property type="match status" value="1"/>
</dbReference>
<dbReference type="PANTHER" id="PTHR38340">
    <property type="entry name" value="S-LAYER PROTEIN"/>
    <property type="match status" value="1"/>
</dbReference>
<dbReference type="PANTHER" id="PTHR38340:SF1">
    <property type="entry name" value="S-LAYER PROTEIN"/>
    <property type="match status" value="1"/>
</dbReference>
<dbReference type="Pfam" id="PF00353">
    <property type="entry name" value="HemolysinCabind"/>
    <property type="match status" value="2"/>
</dbReference>
<dbReference type="Pfam" id="PF02382">
    <property type="entry name" value="RTX"/>
    <property type="match status" value="1"/>
</dbReference>
<dbReference type="Pfam" id="PF08339">
    <property type="entry name" value="RTX_C"/>
    <property type="match status" value="1"/>
</dbReference>
<dbReference type="PRINTS" id="PR00313">
    <property type="entry name" value="CABNDNGRPT"/>
</dbReference>
<dbReference type="PRINTS" id="PR01488">
    <property type="entry name" value="RTXTOXINA"/>
</dbReference>
<dbReference type="SUPFAM" id="SSF51120">
    <property type="entry name" value="beta-Roll"/>
    <property type="match status" value="1"/>
</dbReference>
<dbReference type="PROSITE" id="PS00330">
    <property type="entry name" value="HEMOLYSIN_CALCIUM"/>
    <property type="match status" value="4"/>
</dbReference>
<comment type="function">
    <text evidence="1">Pasteurella leukotoxins are exotoxins that attack host leukocytes and especially polymorphonuclear cells, by causing cell rupture. The leukotoxin binds to the host LFA-1 integrin and induces a signaling cascade leading to many biological effects, including tyrosine phosphorylation of the CD18 tail, elevation of the intracellular Ca(2+) and lysis of the host cell (By similarity). This leukotoxin is a major contributor to the pathogenesis of lung injury in ovine pneumonic pasteurellosis. It also has weak hemolytic activity.</text>
</comment>
<comment type="subcellular location">
    <subcellularLocation>
        <location evidence="1">Secreted</location>
    </subcellularLocation>
    <subcellularLocation>
        <location evidence="1">Host cell membrane</location>
        <topology evidence="1">Multi-pass membrane protein</topology>
    </subcellularLocation>
</comment>
<comment type="domain">
    <text evidence="1">The transmembrane domains are believed to be involved in pore formation in target cells.</text>
</comment>
<comment type="domain">
    <text evidence="1">The Gly-rich region is probably involved in calcium binding, which is required for target cell-binding and cytolytic activity.</text>
</comment>
<comment type="domain">
    <text evidence="1">The C-terminal domain contains an export signal that is recognized by the ABC transporter complex LktBD.</text>
</comment>
<comment type="PTM">
    <text evidence="1">Acylated by LktC. The toxin only becomes active when modified (By similarity).</text>
</comment>
<comment type="miscellaneous">
    <text>The lktCABD operon has a complex mosaic structure that has been derived by extensive inter- and intraspecies horizontal DNA transfer and intragenic recombination events.</text>
</comment>
<comment type="similarity">
    <text evidence="3">Belongs to the RTX prokaryotic toxin (TC 1.C.11) family.</text>
</comment>
<accession>P0C082</accession>
<accession>Q9EUE1</accession>
<protein>
    <recommendedName>
        <fullName>Leukotoxin</fullName>
        <shortName>Lkt</shortName>
    </recommendedName>
</protein>
<sequence>MGNKFTNISTNLRNSWLTAKSGLNNAGQSLAKAGQSLKTGAKKIILYIPKDYQYDTDKGNGLQDLVKAAEELGIEVQKEESNDIAKAQTSLGTIHNVLGLTERGIVLSAPQLDKLLQKTKVGQAIGSTENITKGFSNAKTVLSGIQSILGSVLAGMDLDEALQNNSNELTLAKAGLELTNSLIENIANSVKTLDAFGDQINQLGSKLQNVKGLSSLGEKLKGLSGFDKTSLGLDIVSGLLSGATAALVLADKNASTSRKVGAGFELANQVVGNITKAVSSYILAQRVAAGLSSTGPVAALIASTVSLAISPLSFAGIADKFNHAKSLESYAERFKKLGYDGDNLLAEYQRGTGTIDASVTAINTALAAIAGGVSAAAAGSVVASPIALLVSGITGVISTILQYSKQAMFEHVANKIHNKIVEWEKNNPGKNYFENGYDARYLANLQDNMKFLLNLNKELQAERVIAITQQQWDNNIGDLAGISRLGEKVLSGKAYVDAFEEGKHLKADKLVQLDSANGIIDVSNSGKAKTQHILFRTPLLTPGTEKRERVQTGKYEYITKLNINRVDSWKITDGEASSTFDLTNVVQRIGIELDNAGNVTKTKETKIIAKLGEGDDNVFVGSGTTEIDGGEGYDRVHYSRGNYGALTIDATKETEQGSYTVNRFVETGKALHEVTSTHTALVGSREEKIEYRHSNNRQHAGYYTKDTLTSIEEIIGTSHNDIFKGSQFNDAFNGGDGVDTIDGNGGNDRLFGGKGDDIIDGGDGDDFIDGGKGNDLLHGGRGDDIFVHRQGDGNDSITEAGGHDRLSFSDSNLKDLTFEKVNHHLVITNTKQEKVTIQNWFREEEFAKTVKNYVATRDEKIEEIIGQNGERITSKQVDELIAKGKDNKIDKNDLANVVNSYELLKNSRNVTNSLDKLISSVSSFTSSNDSRNVLATPTSMLDTSLSSLQFARAA</sequence>
<feature type="chain" id="PRO_0000196223" description="Leukotoxin">
    <location>
        <begin position="1"/>
        <end position="954"/>
    </location>
</feature>
<feature type="transmembrane region" description="Helical" evidence="2">
    <location>
        <begin position="230"/>
        <end position="250"/>
    </location>
</feature>
<feature type="transmembrane region" description="Helical" evidence="2">
    <location>
        <begin position="297"/>
        <end position="317"/>
    </location>
</feature>
<feature type="transmembrane region" description="Helical" evidence="2">
    <location>
        <begin position="359"/>
        <end position="379"/>
    </location>
</feature>
<feature type="transmembrane region" description="Helical" evidence="2">
    <location>
        <begin position="381"/>
        <end position="401"/>
    </location>
</feature>
<feature type="repeat" description="Hemolysin-type calcium-binding 1">
    <location>
        <begin position="715"/>
        <end position="732"/>
    </location>
</feature>
<feature type="repeat" description="Hemolysin-type calcium-binding 2">
    <location>
        <begin position="733"/>
        <end position="750"/>
    </location>
</feature>
<feature type="repeat" description="Hemolysin-type calcium-binding 3">
    <location>
        <begin position="751"/>
        <end position="768"/>
    </location>
</feature>
<feature type="repeat" description="Hemolysin-type calcium-binding 4">
    <location>
        <begin position="769"/>
        <end position="786"/>
    </location>
</feature>
<feature type="repeat" description="Hemolysin-type calcium-binding 5">
    <location>
        <begin position="789"/>
        <end position="806"/>
    </location>
</feature>
<evidence type="ECO:0000250" key="1"/>
<evidence type="ECO:0000255" key="2"/>
<evidence type="ECO:0000305" key="3"/>
<organism>
    <name type="scientific">Mannheimia haemolytica</name>
    <name type="common">Pasteurella haemolytica</name>
    <dbReference type="NCBI Taxonomy" id="75985"/>
    <lineage>
        <taxon>Bacteria</taxon>
        <taxon>Pseudomonadati</taxon>
        <taxon>Pseudomonadota</taxon>
        <taxon>Gammaproteobacteria</taxon>
        <taxon>Pasteurellales</taxon>
        <taxon>Pasteurellaceae</taxon>
        <taxon>Mannheimia</taxon>
    </lineage>
</organism>
<keyword id="KW-0106">Calcium</keyword>
<keyword id="KW-0204">Cytolysis</keyword>
<keyword id="KW-0354">Hemolysis</keyword>
<keyword id="KW-1032">Host cell membrane</keyword>
<keyword id="KW-1043">Host membrane</keyword>
<keyword id="KW-0449">Lipoprotein</keyword>
<keyword id="KW-0472">Membrane</keyword>
<keyword id="KW-0677">Repeat</keyword>
<keyword id="KW-0964">Secreted</keyword>
<keyword id="KW-0800">Toxin</keyword>
<keyword id="KW-0812">Transmembrane</keyword>
<keyword id="KW-1133">Transmembrane helix</keyword>
<keyword id="KW-0843">Virulence</keyword>
<name>LKA2C_MANHA</name>
<reference key="1">
    <citation type="journal article" date="2001" name="J. Bacteriol.">
        <title>Sequence diversity and molecular evolution of the leukotoxin (lktA) gene in bovine and ovine strains of Mannheimia (Pasteurella) haemolytica.</title>
        <authorList>
            <person name="Davies R.L."/>
            <person name="Whittam T.S."/>
            <person name="Selander R.K."/>
        </authorList>
    </citation>
    <scope>NUCLEOTIDE SEQUENCE [GENOMIC DNA]</scope>
    <source>
        <strain>Serotype A2 / PH494</strain>
    </source>
</reference>